<organism>
    <name type="scientific">Rhodopseudomonas palustris (strain TIE-1)</name>
    <dbReference type="NCBI Taxonomy" id="395960"/>
    <lineage>
        <taxon>Bacteria</taxon>
        <taxon>Pseudomonadati</taxon>
        <taxon>Pseudomonadota</taxon>
        <taxon>Alphaproteobacteria</taxon>
        <taxon>Hyphomicrobiales</taxon>
        <taxon>Nitrobacteraceae</taxon>
        <taxon>Rhodopseudomonas</taxon>
    </lineage>
</organism>
<name>HIS3_RHOPT</name>
<gene>
    <name evidence="1" type="primary">hisI</name>
    <name type="ordered locus">Rpal_3871</name>
</gene>
<accession>B3QE24</accession>
<protein>
    <recommendedName>
        <fullName evidence="1">Phosphoribosyl-AMP cyclohydrolase</fullName>
        <shortName evidence="1">PRA-CH</shortName>
        <ecNumber evidence="1">3.5.4.19</ecNumber>
    </recommendedName>
</protein>
<sequence length="151" mass="16806">MSSESRSASSPVAPDDIEEGVVLRPKFDAHGLVTVVATDARTGDVLMVAFMNDEALDRTIQTGEAWYYSRSRKRLWKKGETSGHIQKVLEMRVDCDQDAVWIKVDQTGGAACHTGRHSCFYRRIDRGGDGAPVLIETDAERKFDPDKVYGK</sequence>
<evidence type="ECO:0000255" key="1">
    <source>
        <dbReference type="HAMAP-Rule" id="MF_01021"/>
    </source>
</evidence>
<proteinExistence type="inferred from homology"/>
<reference key="1">
    <citation type="submission" date="2008-05" db="EMBL/GenBank/DDBJ databases">
        <title>Complete sequence of Rhodopseudomonas palustris TIE-1.</title>
        <authorList>
            <consortium name="US DOE Joint Genome Institute"/>
            <person name="Lucas S."/>
            <person name="Copeland A."/>
            <person name="Lapidus A."/>
            <person name="Glavina del Rio T."/>
            <person name="Dalin E."/>
            <person name="Tice H."/>
            <person name="Pitluck S."/>
            <person name="Chain P."/>
            <person name="Malfatti S."/>
            <person name="Shin M."/>
            <person name="Vergez L."/>
            <person name="Lang D."/>
            <person name="Schmutz J."/>
            <person name="Larimer F."/>
            <person name="Land M."/>
            <person name="Hauser L."/>
            <person name="Kyrpides N."/>
            <person name="Mikhailova N."/>
            <person name="Emerson D."/>
            <person name="Newman D.K."/>
            <person name="Roden E."/>
            <person name="Richardson P."/>
        </authorList>
    </citation>
    <scope>NUCLEOTIDE SEQUENCE [LARGE SCALE GENOMIC DNA]</scope>
    <source>
        <strain>TIE-1</strain>
    </source>
</reference>
<feature type="chain" id="PRO_1000135366" description="Phosphoribosyl-AMP cyclohydrolase">
    <location>
        <begin position="1"/>
        <end position="151"/>
    </location>
</feature>
<feature type="binding site" evidence="1">
    <location>
        <position position="94"/>
    </location>
    <ligand>
        <name>Mg(2+)</name>
        <dbReference type="ChEBI" id="CHEBI:18420"/>
    </ligand>
</feature>
<feature type="binding site" evidence="1">
    <location>
        <position position="95"/>
    </location>
    <ligand>
        <name>Zn(2+)</name>
        <dbReference type="ChEBI" id="CHEBI:29105"/>
        <note>ligand shared between dimeric partners</note>
    </ligand>
</feature>
<feature type="binding site" evidence="1">
    <location>
        <position position="96"/>
    </location>
    <ligand>
        <name>Mg(2+)</name>
        <dbReference type="ChEBI" id="CHEBI:18420"/>
    </ligand>
</feature>
<feature type="binding site" evidence="1">
    <location>
        <position position="98"/>
    </location>
    <ligand>
        <name>Mg(2+)</name>
        <dbReference type="ChEBI" id="CHEBI:18420"/>
    </ligand>
</feature>
<feature type="binding site" evidence="1">
    <location>
        <position position="112"/>
    </location>
    <ligand>
        <name>Zn(2+)</name>
        <dbReference type="ChEBI" id="CHEBI:29105"/>
        <note>ligand shared between dimeric partners</note>
    </ligand>
</feature>
<feature type="binding site" evidence="1">
    <location>
        <position position="119"/>
    </location>
    <ligand>
        <name>Zn(2+)</name>
        <dbReference type="ChEBI" id="CHEBI:29105"/>
        <note>ligand shared between dimeric partners</note>
    </ligand>
</feature>
<dbReference type="EC" id="3.5.4.19" evidence="1"/>
<dbReference type="EMBL" id="CP001096">
    <property type="protein sequence ID" value="ACF02369.1"/>
    <property type="molecule type" value="Genomic_DNA"/>
</dbReference>
<dbReference type="RefSeq" id="WP_012496818.1">
    <property type="nucleotide sequence ID" value="NC_011004.1"/>
</dbReference>
<dbReference type="SMR" id="B3QE24"/>
<dbReference type="KEGG" id="rpt:Rpal_3871"/>
<dbReference type="HOGENOM" id="CLU_048577_5_0_5"/>
<dbReference type="OrthoDB" id="9795769at2"/>
<dbReference type="UniPathway" id="UPA00031">
    <property type="reaction ID" value="UER00008"/>
</dbReference>
<dbReference type="Proteomes" id="UP000001725">
    <property type="component" value="Chromosome"/>
</dbReference>
<dbReference type="GO" id="GO:0005737">
    <property type="term" value="C:cytoplasm"/>
    <property type="evidence" value="ECO:0007669"/>
    <property type="project" value="UniProtKB-SubCell"/>
</dbReference>
<dbReference type="GO" id="GO:0000287">
    <property type="term" value="F:magnesium ion binding"/>
    <property type="evidence" value="ECO:0007669"/>
    <property type="project" value="UniProtKB-UniRule"/>
</dbReference>
<dbReference type="GO" id="GO:0004635">
    <property type="term" value="F:phosphoribosyl-AMP cyclohydrolase activity"/>
    <property type="evidence" value="ECO:0007669"/>
    <property type="project" value="UniProtKB-UniRule"/>
</dbReference>
<dbReference type="GO" id="GO:0008270">
    <property type="term" value="F:zinc ion binding"/>
    <property type="evidence" value="ECO:0007669"/>
    <property type="project" value="UniProtKB-UniRule"/>
</dbReference>
<dbReference type="GO" id="GO:0000105">
    <property type="term" value="P:L-histidine biosynthetic process"/>
    <property type="evidence" value="ECO:0007669"/>
    <property type="project" value="UniProtKB-UniRule"/>
</dbReference>
<dbReference type="FunFam" id="3.10.20.810:FF:000001">
    <property type="entry name" value="Histidine biosynthesis bifunctional protein HisIE"/>
    <property type="match status" value="1"/>
</dbReference>
<dbReference type="Gene3D" id="3.10.20.810">
    <property type="entry name" value="Phosphoribosyl-AMP cyclohydrolase"/>
    <property type="match status" value="1"/>
</dbReference>
<dbReference type="HAMAP" id="MF_01021">
    <property type="entry name" value="HisI"/>
    <property type="match status" value="1"/>
</dbReference>
<dbReference type="InterPro" id="IPR026660">
    <property type="entry name" value="PRA-CH"/>
</dbReference>
<dbReference type="InterPro" id="IPR002496">
    <property type="entry name" value="PRib_AMP_CycHydrolase_dom"/>
</dbReference>
<dbReference type="InterPro" id="IPR038019">
    <property type="entry name" value="PRib_AMP_CycHydrolase_sf"/>
</dbReference>
<dbReference type="NCBIfam" id="NF000768">
    <property type="entry name" value="PRK00051.1"/>
    <property type="match status" value="1"/>
</dbReference>
<dbReference type="PANTHER" id="PTHR42945">
    <property type="entry name" value="HISTIDINE BIOSYNTHESIS BIFUNCTIONAL PROTEIN"/>
    <property type="match status" value="1"/>
</dbReference>
<dbReference type="PANTHER" id="PTHR42945:SF1">
    <property type="entry name" value="HISTIDINE BIOSYNTHESIS BIFUNCTIONAL PROTEIN HIS7"/>
    <property type="match status" value="1"/>
</dbReference>
<dbReference type="Pfam" id="PF01502">
    <property type="entry name" value="PRA-CH"/>
    <property type="match status" value="1"/>
</dbReference>
<dbReference type="SUPFAM" id="SSF141734">
    <property type="entry name" value="HisI-like"/>
    <property type="match status" value="1"/>
</dbReference>
<comment type="function">
    <text evidence="1">Catalyzes the hydrolysis of the adenine ring of phosphoribosyl-AMP.</text>
</comment>
<comment type="catalytic activity">
    <reaction evidence="1">
        <text>1-(5-phospho-beta-D-ribosyl)-5'-AMP + H2O = 1-(5-phospho-beta-D-ribosyl)-5-[(5-phospho-beta-D-ribosylamino)methylideneamino]imidazole-4-carboxamide</text>
        <dbReference type="Rhea" id="RHEA:20049"/>
        <dbReference type="ChEBI" id="CHEBI:15377"/>
        <dbReference type="ChEBI" id="CHEBI:58435"/>
        <dbReference type="ChEBI" id="CHEBI:59457"/>
        <dbReference type="EC" id="3.5.4.19"/>
    </reaction>
</comment>
<comment type="cofactor">
    <cofactor evidence="1">
        <name>Mg(2+)</name>
        <dbReference type="ChEBI" id="CHEBI:18420"/>
    </cofactor>
    <text evidence="1">Binds 1 Mg(2+) ion per subunit.</text>
</comment>
<comment type="cofactor">
    <cofactor evidence="1">
        <name>Zn(2+)</name>
        <dbReference type="ChEBI" id="CHEBI:29105"/>
    </cofactor>
    <text evidence="1">Binds 1 zinc ion per subunit.</text>
</comment>
<comment type="pathway">
    <text evidence="1">Amino-acid biosynthesis; L-histidine biosynthesis; L-histidine from 5-phospho-alpha-D-ribose 1-diphosphate: step 3/9.</text>
</comment>
<comment type="subunit">
    <text evidence="1">Homodimer.</text>
</comment>
<comment type="subcellular location">
    <subcellularLocation>
        <location evidence="1">Cytoplasm</location>
    </subcellularLocation>
</comment>
<comment type="similarity">
    <text evidence="1">Belongs to the PRA-CH family.</text>
</comment>
<keyword id="KW-0028">Amino-acid biosynthesis</keyword>
<keyword id="KW-0963">Cytoplasm</keyword>
<keyword id="KW-0368">Histidine biosynthesis</keyword>
<keyword id="KW-0378">Hydrolase</keyword>
<keyword id="KW-0460">Magnesium</keyword>
<keyword id="KW-0479">Metal-binding</keyword>
<keyword id="KW-0862">Zinc</keyword>